<evidence type="ECO:0000250" key="1"/>
<evidence type="ECO:0000255" key="2">
    <source>
        <dbReference type="PROSITE-ProRule" id="PRU01150"/>
    </source>
</evidence>
<evidence type="ECO:0000256" key="3">
    <source>
        <dbReference type="SAM" id="MobiDB-lite"/>
    </source>
</evidence>
<evidence type="ECO:0000305" key="4"/>
<accession>Q28BU7</accession>
<proteinExistence type="inferred from homology"/>
<feature type="chain" id="PRO_0000365090" description="COX assembly mitochondrial protein 2 homolog">
    <location>
        <begin position="1"/>
        <end position="79"/>
    </location>
</feature>
<feature type="domain" description="CHCH" evidence="2">
    <location>
        <begin position="11"/>
        <end position="55"/>
    </location>
</feature>
<feature type="region of interest" description="Disordered" evidence="3">
    <location>
        <begin position="52"/>
        <end position="79"/>
    </location>
</feature>
<feature type="short sequence motif" description="Cx9C motif 1" evidence="2">
    <location>
        <begin position="14"/>
        <end position="24"/>
    </location>
</feature>
<feature type="short sequence motif" description="Cx9C motif 2" evidence="2">
    <location>
        <begin position="37"/>
        <end position="47"/>
    </location>
</feature>
<feature type="compositionally biased region" description="Basic and acidic residues" evidence="3">
    <location>
        <begin position="52"/>
        <end position="67"/>
    </location>
</feature>
<feature type="disulfide bond" evidence="2">
    <location>
        <begin position="14"/>
        <end position="47"/>
    </location>
</feature>
<feature type="disulfide bond" evidence="2">
    <location>
        <begin position="24"/>
        <end position="37"/>
    </location>
</feature>
<organism>
    <name type="scientific">Xenopus tropicalis</name>
    <name type="common">Western clawed frog</name>
    <name type="synonym">Silurana tropicalis</name>
    <dbReference type="NCBI Taxonomy" id="8364"/>
    <lineage>
        <taxon>Eukaryota</taxon>
        <taxon>Metazoa</taxon>
        <taxon>Chordata</taxon>
        <taxon>Craniata</taxon>
        <taxon>Vertebrata</taxon>
        <taxon>Euteleostomi</taxon>
        <taxon>Amphibia</taxon>
        <taxon>Batrachia</taxon>
        <taxon>Anura</taxon>
        <taxon>Pipoidea</taxon>
        <taxon>Pipidae</taxon>
        <taxon>Xenopodinae</taxon>
        <taxon>Xenopus</taxon>
        <taxon>Silurana</taxon>
    </lineage>
</organism>
<name>COXM2_XENTR</name>
<protein>
    <recommendedName>
        <fullName>COX assembly mitochondrial protein 2 homolog</fullName>
    </recommendedName>
</protein>
<sequence length="79" mass="9480">MHPDLSSHLHTDECNVAINLLKKCHSENQFLKYFGQCNDFDREMRKCLKKEYEDRRAKSRARSEHMKQRLLNAEKQADN</sequence>
<reference key="1">
    <citation type="submission" date="2006-10" db="EMBL/GenBank/DDBJ databases">
        <authorList>
            <consortium name="Sanger Xenopus tropicalis EST/cDNA project"/>
        </authorList>
    </citation>
    <scope>NUCLEOTIDE SEQUENCE [LARGE SCALE MRNA]</scope>
    <source>
        <tissue>Neurula</tissue>
    </source>
</reference>
<reference key="2">
    <citation type="submission" date="2007-12" db="EMBL/GenBank/DDBJ databases">
        <authorList>
            <consortium name="NIH - Xenopus Gene Collection (XGC) project"/>
        </authorList>
    </citation>
    <scope>NUCLEOTIDE SEQUENCE [LARGE SCALE MRNA]</scope>
    <source>
        <strain>N6</strain>
        <tissue>Kidney</tissue>
        <tissue>Ovary</tissue>
    </source>
</reference>
<keyword id="KW-1015">Disulfide bond</keyword>
<keyword id="KW-0496">Mitochondrion</keyword>
<keyword id="KW-1185">Reference proteome</keyword>
<gene>
    <name type="primary">cmc2</name>
    <name type="ORF">TNeu078f03.1</name>
</gene>
<dbReference type="EMBL" id="CR942626">
    <property type="protein sequence ID" value="CAJ82475.1"/>
    <property type="molecule type" value="mRNA"/>
</dbReference>
<dbReference type="EMBL" id="BC122067">
    <property type="protein sequence ID" value="AAI22068.1"/>
    <property type="molecule type" value="mRNA"/>
</dbReference>
<dbReference type="EMBL" id="BC155539">
    <property type="protein sequence ID" value="AAI55540.1"/>
    <property type="molecule type" value="mRNA"/>
</dbReference>
<dbReference type="RefSeq" id="NP_001039161.1">
    <property type="nucleotide sequence ID" value="NM_001045696.1"/>
</dbReference>
<dbReference type="RefSeq" id="XP_012816724.1">
    <property type="nucleotide sequence ID" value="XM_012961270.1"/>
</dbReference>
<dbReference type="RefSeq" id="XP_012816725.1">
    <property type="nucleotide sequence ID" value="XM_012961271.1"/>
</dbReference>
<dbReference type="RefSeq" id="XP_031756027.1">
    <property type="nucleotide sequence ID" value="XM_031900167.1"/>
</dbReference>
<dbReference type="SMR" id="Q28BU7"/>
<dbReference type="FunCoup" id="Q28BU7">
    <property type="interactions" value="532"/>
</dbReference>
<dbReference type="STRING" id="8364.ENSXETP00000035557"/>
<dbReference type="PaxDb" id="8364-ENSXETP00000053297"/>
<dbReference type="DNASU" id="733988"/>
<dbReference type="GeneID" id="733988"/>
<dbReference type="KEGG" id="xtr:733988"/>
<dbReference type="AGR" id="Xenbase:XB-GENE-1016226"/>
<dbReference type="CTD" id="56942"/>
<dbReference type="Xenbase" id="XB-GENE-1016226">
    <property type="gene designation" value="cmc2"/>
</dbReference>
<dbReference type="InParanoid" id="Q28BU7"/>
<dbReference type="OrthoDB" id="532630at2759"/>
<dbReference type="Proteomes" id="UP000008143">
    <property type="component" value="Chromosome 4"/>
</dbReference>
<dbReference type="Bgee" id="ENSXETG00000039714">
    <property type="expression patterns" value="Expressed in heart and 13 other cell types or tissues"/>
</dbReference>
<dbReference type="ExpressionAtlas" id="Q28BU7">
    <property type="expression patterns" value="baseline"/>
</dbReference>
<dbReference type="GO" id="GO:0005739">
    <property type="term" value="C:mitochondrion"/>
    <property type="evidence" value="ECO:0007669"/>
    <property type="project" value="UniProtKB-SubCell"/>
</dbReference>
<dbReference type="InterPro" id="IPR013892">
    <property type="entry name" value="Cyt_c_biogenesis_Cmc1-like"/>
</dbReference>
<dbReference type="PANTHER" id="PTHR22977">
    <property type="entry name" value="COX ASSEMBLY MITOCHONDRIAL PROTEIN"/>
    <property type="match status" value="1"/>
</dbReference>
<dbReference type="PANTHER" id="PTHR22977:SF1">
    <property type="entry name" value="COX ASSEMBLY MITOCHONDRIAL PROTEIN 2 HOMOLOG"/>
    <property type="match status" value="1"/>
</dbReference>
<dbReference type="Pfam" id="PF08583">
    <property type="entry name" value="Cmc1"/>
    <property type="match status" value="1"/>
</dbReference>
<dbReference type="PROSITE" id="PS51808">
    <property type="entry name" value="CHCH"/>
    <property type="match status" value="1"/>
</dbReference>
<comment type="subcellular location">
    <subcellularLocation>
        <location evidence="1">Mitochondrion</location>
    </subcellularLocation>
</comment>
<comment type="similarity">
    <text evidence="4">Belongs to the CMC family.</text>
</comment>